<evidence type="ECO:0000255" key="1">
    <source>
        <dbReference type="PROSITE-ProRule" id="PRU00303"/>
    </source>
</evidence>
<evidence type="ECO:0000256" key="2">
    <source>
        <dbReference type="SAM" id="MobiDB-lite"/>
    </source>
</evidence>
<evidence type="ECO:0000269" key="3">
    <source>
    </source>
</evidence>
<evidence type="ECO:0000269" key="4">
    <source>
    </source>
</evidence>
<evidence type="ECO:0000303" key="5">
    <source>
    </source>
</evidence>
<evidence type="ECO:0000305" key="6"/>
<evidence type="ECO:0000305" key="7">
    <source>
    </source>
</evidence>
<evidence type="ECO:0000305" key="8">
    <source>
    </source>
</evidence>
<comment type="function">
    <text evidence="3 4">Involved in galactan degradation (PubMed:27501980, PubMed:29240795). Part of the ABC transporter complex GanPQS involved in the uptake of galactooligosaccharides (PubMed:27501980, PubMed:29240795). Binds mainly galactotetraose and galactotriose (PubMed:27501980).</text>
</comment>
<comment type="subunit">
    <text evidence="3 4">The complex is composed of two ATP-binding proteins (MsmX), two transmembrane proteins (GanP and GanQ) and a solute-binding protein (GanS).</text>
</comment>
<comment type="subcellular location">
    <subcellularLocation>
        <location evidence="1">Cell membrane</location>
        <topology evidence="1">Lipid-anchor</topology>
    </subcellularLocation>
</comment>
<comment type="induction">
    <text evidence="3">Repressed by the transcriptional regulator GanR and induced by galactobiose. Also repressed by glucose.</text>
</comment>
<comment type="disruption phenotype">
    <text evidence="4">Deletion mutant displays a 2-fold increase in the doubling time when galactan is the sole carbon and energy source.</text>
</comment>
<comment type="similarity">
    <text evidence="6">Belongs to the bacterial solute-binding protein 1 family.</text>
</comment>
<comment type="caution">
    <text evidence="7 8">Was originally described as a cyclodextrin-binding protein, but it was shown later that it has no affinity for cyclodextrin.</text>
</comment>
<gene>
    <name evidence="5" type="primary">ganS</name>
    <name type="synonym">cycB</name>
    <name type="synonym">yvfK</name>
    <name type="ordered locus">BSU34160</name>
</gene>
<accession>O07009</accession>
<accession>Q795J7</accession>
<dbReference type="EMBL" id="Z94043">
    <property type="protein sequence ID" value="CAB08005.1"/>
    <property type="molecule type" value="Genomic_DNA"/>
</dbReference>
<dbReference type="EMBL" id="AL009126">
    <property type="protein sequence ID" value="CAB15421.1"/>
    <property type="molecule type" value="Genomic_DNA"/>
</dbReference>
<dbReference type="PIR" id="C70038">
    <property type="entry name" value="C70038"/>
</dbReference>
<dbReference type="RefSeq" id="NP_391296.1">
    <property type="nucleotide sequence ID" value="NC_000964.3"/>
</dbReference>
<dbReference type="RefSeq" id="WP_003228280.1">
    <property type="nucleotide sequence ID" value="NZ_OZ025638.1"/>
</dbReference>
<dbReference type="SMR" id="O07009"/>
<dbReference type="FunCoup" id="O07009">
    <property type="interactions" value="210"/>
</dbReference>
<dbReference type="STRING" id="224308.BSU34160"/>
<dbReference type="TCDB" id="3.A.1.1.2">
    <property type="family name" value="the atp-binding cassette (abc) superfamily"/>
</dbReference>
<dbReference type="PaxDb" id="224308-BSU34160"/>
<dbReference type="DNASU" id="936329"/>
<dbReference type="EnsemblBacteria" id="CAB15421">
    <property type="protein sequence ID" value="CAB15421"/>
    <property type="gene ID" value="BSU_34160"/>
</dbReference>
<dbReference type="GeneID" id="936329"/>
<dbReference type="KEGG" id="bsu:BSU34160"/>
<dbReference type="PATRIC" id="fig|224308.179.peg.3703"/>
<dbReference type="eggNOG" id="COG2182">
    <property type="taxonomic scope" value="Bacteria"/>
</dbReference>
<dbReference type="InParanoid" id="O07009"/>
<dbReference type="OrthoDB" id="9766758at2"/>
<dbReference type="PhylomeDB" id="O07009"/>
<dbReference type="BioCyc" id="BSUB:BSU34160-MONOMER"/>
<dbReference type="Proteomes" id="UP000001570">
    <property type="component" value="Chromosome"/>
</dbReference>
<dbReference type="GO" id="GO:0055052">
    <property type="term" value="C:ATP-binding cassette (ABC) transporter complex, substrate-binding subunit-containing"/>
    <property type="evidence" value="ECO:0000318"/>
    <property type="project" value="GO_Central"/>
</dbReference>
<dbReference type="GO" id="GO:0015144">
    <property type="term" value="F:carbohydrate transmembrane transporter activity"/>
    <property type="evidence" value="ECO:0007669"/>
    <property type="project" value="InterPro"/>
</dbReference>
<dbReference type="GO" id="GO:1901982">
    <property type="term" value="F:maltose binding"/>
    <property type="evidence" value="ECO:0000318"/>
    <property type="project" value="GO_Central"/>
</dbReference>
<dbReference type="GO" id="GO:0042956">
    <property type="term" value="P:maltodextrin transmembrane transport"/>
    <property type="evidence" value="ECO:0000318"/>
    <property type="project" value="GO_Central"/>
</dbReference>
<dbReference type="GO" id="GO:0015768">
    <property type="term" value="P:maltose transport"/>
    <property type="evidence" value="ECO:0000318"/>
    <property type="project" value="GO_Central"/>
</dbReference>
<dbReference type="Gene3D" id="3.40.190.10">
    <property type="entry name" value="Periplasmic binding protein-like II"/>
    <property type="match status" value="2"/>
</dbReference>
<dbReference type="InterPro" id="IPR006060">
    <property type="entry name" value="Maltose/Cyclodextrin-bd"/>
</dbReference>
<dbReference type="InterPro" id="IPR006059">
    <property type="entry name" value="SBP"/>
</dbReference>
<dbReference type="PANTHER" id="PTHR30061">
    <property type="entry name" value="MALTOSE-BINDING PERIPLASMIC PROTEIN"/>
    <property type="match status" value="1"/>
</dbReference>
<dbReference type="PANTHER" id="PTHR30061:SF50">
    <property type="entry name" value="MALTOSE_MALTODEXTRIN-BINDING PERIPLASMIC PROTEIN"/>
    <property type="match status" value="1"/>
</dbReference>
<dbReference type="Pfam" id="PF13416">
    <property type="entry name" value="SBP_bac_8"/>
    <property type="match status" value="1"/>
</dbReference>
<dbReference type="PRINTS" id="PR00181">
    <property type="entry name" value="MALTOSEBP"/>
</dbReference>
<dbReference type="SUPFAM" id="SSF53850">
    <property type="entry name" value="Periplasmic binding protein-like II"/>
    <property type="match status" value="1"/>
</dbReference>
<dbReference type="PROSITE" id="PS51257">
    <property type="entry name" value="PROKAR_LIPOPROTEIN"/>
    <property type="match status" value="1"/>
</dbReference>
<organism>
    <name type="scientific">Bacillus subtilis (strain 168)</name>
    <dbReference type="NCBI Taxonomy" id="224308"/>
    <lineage>
        <taxon>Bacteria</taxon>
        <taxon>Bacillati</taxon>
        <taxon>Bacillota</taxon>
        <taxon>Bacilli</taxon>
        <taxon>Bacillales</taxon>
        <taxon>Bacillaceae</taxon>
        <taxon>Bacillus</taxon>
    </lineage>
</organism>
<name>GANS_BACSU</name>
<protein>
    <recommendedName>
        <fullName evidence="6">Galactooligosaccharide-binding protein</fullName>
    </recommendedName>
    <alternativeName>
        <fullName>Cyclodextrin-binding protein</fullName>
    </alternativeName>
</protein>
<sequence>MKMAKKCSVFMLCAAVSLSLAACGPKESSSAKSSSKGSELVVWEDKEKSNGIKDAVAAFEKEHDVKVKVVEKPYAKQIEDLRMDGPAGTGPDVLTMPGDQIGTAVTEGLLKELHVKKDVQSLYTDASIQSQMVDQKLYGLPKAVETTVLFYNKDLITEKELPKTLEEWYDYSKKTADGSKFGFLALFDQIYYAESVMSGYGGYIFGKAKDGSYNPSDIGINNEGAVKGAALIQKFYKDGLFPAGIIGEQGINVLESLFTEGKAAAIISGPWNVEAFSNAGINYGITKLPKLENGKNMSSFIGVKSYNVSAFSKNEELAQELAVFLANEKNSKTRYEETKEVPAVKSLANDPAIMKSEAARAVTEQSRFSEPTPNIPEMNEIWTPADSALQTVATGKADPKQALDQAAETAKGQIKAKHSGK</sequence>
<feature type="signal peptide" evidence="1">
    <location>
        <begin position="1"/>
        <end position="22"/>
    </location>
</feature>
<feature type="chain" id="PRO_0000360053" description="Galactooligosaccharide-binding protein">
    <location>
        <begin position="23"/>
        <end position="421"/>
    </location>
</feature>
<feature type="region of interest" description="Disordered" evidence="2">
    <location>
        <begin position="393"/>
        <end position="421"/>
    </location>
</feature>
<feature type="lipid moiety-binding region" description="N-palmitoyl cysteine" evidence="1">
    <location>
        <position position="23"/>
    </location>
</feature>
<feature type="lipid moiety-binding region" description="S-diacylglycerol cysteine" evidence="1">
    <location>
        <position position="23"/>
    </location>
</feature>
<reference key="1">
    <citation type="submission" date="1997-04" db="EMBL/GenBank/DDBJ databases">
        <authorList>
            <person name="Denizot F."/>
        </authorList>
    </citation>
    <scope>NUCLEOTIDE SEQUENCE [GENOMIC DNA]</scope>
    <source>
        <strain>168</strain>
    </source>
</reference>
<reference key="2">
    <citation type="journal article" date="1997" name="Nature">
        <title>The complete genome sequence of the Gram-positive bacterium Bacillus subtilis.</title>
        <authorList>
            <person name="Kunst F."/>
            <person name="Ogasawara N."/>
            <person name="Moszer I."/>
            <person name="Albertini A.M."/>
            <person name="Alloni G."/>
            <person name="Azevedo V."/>
            <person name="Bertero M.G."/>
            <person name="Bessieres P."/>
            <person name="Bolotin A."/>
            <person name="Borchert S."/>
            <person name="Borriss R."/>
            <person name="Boursier L."/>
            <person name="Brans A."/>
            <person name="Braun M."/>
            <person name="Brignell S.C."/>
            <person name="Bron S."/>
            <person name="Brouillet S."/>
            <person name="Bruschi C.V."/>
            <person name="Caldwell B."/>
            <person name="Capuano V."/>
            <person name="Carter N.M."/>
            <person name="Choi S.-K."/>
            <person name="Codani J.-J."/>
            <person name="Connerton I.F."/>
            <person name="Cummings N.J."/>
            <person name="Daniel R.A."/>
            <person name="Denizot F."/>
            <person name="Devine K.M."/>
            <person name="Duesterhoeft A."/>
            <person name="Ehrlich S.D."/>
            <person name="Emmerson P.T."/>
            <person name="Entian K.-D."/>
            <person name="Errington J."/>
            <person name="Fabret C."/>
            <person name="Ferrari E."/>
            <person name="Foulger D."/>
            <person name="Fritz C."/>
            <person name="Fujita M."/>
            <person name="Fujita Y."/>
            <person name="Fuma S."/>
            <person name="Galizzi A."/>
            <person name="Galleron N."/>
            <person name="Ghim S.-Y."/>
            <person name="Glaser P."/>
            <person name="Goffeau A."/>
            <person name="Golightly E.J."/>
            <person name="Grandi G."/>
            <person name="Guiseppi G."/>
            <person name="Guy B.J."/>
            <person name="Haga K."/>
            <person name="Haiech J."/>
            <person name="Harwood C.R."/>
            <person name="Henaut A."/>
            <person name="Hilbert H."/>
            <person name="Holsappel S."/>
            <person name="Hosono S."/>
            <person name="Hullo M.-F."/>
            <person name="Itaya M."/>
            <person name="Jones L.-M."/>
            <person name="Joris B."/>
            <person name="Karamata D."/>
            <person name="Kasahara Y."/>
            <person name="Klaerr-Blanchard M."/>
            <person name="Klein C."/>
            <person name="Kobayashi Y."/>
            <person name="Koetter P."/>
            <person name="Koningstein G."/>
            <person name="Krogh S."/>
            <person name="Kumano M."/>
            <person name="Kurita K."/>
            <person name="Lapidus A."/>
            <person name="Lardinois S."/>
            <person name="Lauber J."/>
            <person name="Lazarevic V."/>
            <person name="Lee S.-M."/>
            <person name="Levine A."/>
            <person name="Liu H."/>
            <person name="Masuda S."/>
            <person name="Mauel C."/>
            <person name="Medigue C."/>
            <person name="Medina N."/>
            <person name="Mellado R.P."/>
            <person name="Mizuno M."/>
            <person name="Moestl D."/>
            <person name="Nakai S."/>
            <person name="Noback M."/>
            <person name="Noone D."/>
            <person name="O'Reilly M."/>
            <person name="Ogawa K."/>
            <person name="Ogiwara A."/>
            <person name="Oudega B."/>
            <person name="Park S.-H."/>
            <person name="Parro V."/>
            <person name="Pohl T.M."/>
            <person name="Portetelle D."/>
            <person name="Porwollik S."/>
            <person name="Prescott A.M."/>
            <person name="Presecan E."/>
            <person name="Pujic P."/>
            <person name="Purnelle B."/>
            <person name="Rapoport G."/>
            <person name="Rey M."/>
            <person name="Reynolds S."/>
            <person name="Rieger M."/>
            <person name="Rivolta C."/>
            <person name="Rocha E."/>
            <person name="Roche B."/>
            <person name="Rose M."/>
            <person name="Sadaie Y."/>
            <person name="Sato T."/>
            <person name="Scanlan E."/>
            <person name="Schleich S."/>
            <person name="Schroeter R."/>
            <person name="Scoffone F."/>
            <person name="Sekiguchi J."/>
            <person name="Sekowska A."/>
            <person name="Seror S.J."/>
            <person name="Serror P."/>
            <person name="Shin B.-S."/>
            <person name="Soldo B."/>
            <person name="Sorokin A."/>
            <person name="Tacconi E."/>
            <person name="Takagi T."/>
            <person name="Takahashi H."/>
            <person name="Takemaru K."/>
            <person name="Takeuchi M."/>
            <person name="Tamakoshi A."/>
            <person name="Tanaka T."/>
            <person name="Terpstra P."/>
            <person name="Tognoni A."/>
            <person name="Tosato V."/>
            <person name="Uchiyama S."/>
            <person name="Vandenbol M."/>
            <person name="Vannier F."/>
            <person name="Vassarotti A."/>
            <person name="Viari A."/>
            <person name="Wambutt R."/>
            <person name="Wedler E."/>
            <person name="Wedler H."/>
            <person name="Weitzenegger T."/>
            <person name="Winters P."/>
            <person name="Wipat A."/>
            <person name="Yamamoto H."/>
            <person name="Yamane K."/>
            <person name="Yasumoto K."/>
            <person name="Yata K."/>
            <person name="Yoshida K."/>
            <person name="Yoshikawa H.-F."/>
            <person name="Zumstein E."/>
            <person name="Yoshikawa H."/>
            <person name="Danchin A."/>
        </authorList>
    </citation>
    <scope>NUCLEOTIDE SEQUENCE [LARGE SCALE GENOMIC DNA]</scope>
    <source>
        <strain>168</strain>
    </source>
</reference>
<reference key="3">
    <citation type="journal article" date="2001" name="FEMS Microbiol. Lett.">
        <title>Bacillus subtilis contains a cyclodextrin-binding protein which is part of a putative ABC-transporter.</title>
        <authorList>
            <person name="Kamionka A."/>
            <person name="Dahl M.K."/>
        </authorList>
    </citation>
    <scope>CYCLODEXTRIN-BINDING PROTEIN</scope>
</reference>
<reference key="4">
    <citation type="journal article" date="2016" name="J. Bacteriol.">
        <title>Role of the ganSPQAB operon in degradation of galactan by Bacillus subtilis.</title>
        <authorList>
            <person name="Watzlawick H."/>
            <person name="Morabbi Heravi K."/>
            <person name="Altenbuchner J."/>
        </authorList>
    </citation>
    <scope>FUNCTION</scope>
    <scope>SUBUNIT</scope>
    <scope>INDUCTION</scope>
</reference>
<reference key="5">
    <citation type="journal article" date="2017" name="PLoS ONE">
        <title>The MsmX ATPase plays a crucial role in pectin mobilization by Bacillus subtilis.</title>
        <authorList>
            <person name="Ferreira M.J."/>
            <person name="Mendes A.L."/>
            <person name="de Sa-Nogueira I."/>
        </authorList>
    </citation>
    <scope>FUNCTION</scope>
    <scope>SUBUNIT</scope>
    <scope>DISRUPTION PHENOTYPE</scope>
</reference>
<keyword id="KW-1003">Cell membrane</keyword>
<keyword id="KW-0449">Lipoprotein</keyword>
<keyword id="KW-0472">Membrane</keyword>
<keyword id="KW-0564">Palmitate</keyword>
<keyword id="KW-1185">Reference proteome</keyword>
<keyword id="KW-0732">Signal</keyword>
<keyword id="KW-0762">Sugar transport</keyword>
<keyword id="KW-0813">Transport</keyword>
<proteinExistence type="evidence at protein level"/>